<proteinExistence type="inferred from homology"/>
<protein>
    <recommendedName>
        <fullName evidence="1">Ubiquinone biosynthesis O-methyltransferase</fullName>
    </recommendedName>
    <alternativeName>
        <fullName evidence="1">2-polyprenyl-6-hydroxyphenol methylase</fullName>
        <ecNumber evidence="1">2.1.1.222</ecNumber>
    </alternativeName>
    <alternativeName>
        <fullName evidence="1">3-demethylubiquinone 3-O-methyltransferase</fullName>
        <ecNumber evidence="1">2.1.1.64</ecNumber>
    </alternativeName>
</protein>
<sequence>MTETARTTIDASEIEHFSRIAAQWWDPQGKFRPLHKFNPTRLAYIKEKVCAKFNRDPNAPRPLEGLRFLDIGCGGGLLCEPMARLGATVIGADASATNIEVAKIHAAQSSLDIDYRATTAEALADAGEKFDVVLNMEVVEHVSDVDLFMSATSAMVKPGGLMFVATINRTLKAYGLAIIGAEYVLRWLPRGTHQYEKLVRPEELEAAFSKADLRLIDKLGVTYNPLADSWNRSRDMDVNYMVLAERPA</sequence>
<gene>
    <name evidence="1" type="primary">ubiG</name>
    <name type="ordered locus">BCAN_A1916</name>
</gene>
<accession>A9M8K8</accession>
<dbReference type="EC" id="2.1.1.222" evidence="1"/>
<dbReference type="EC" id="2.1.1.64" evidence="1"/>
<dbReference type="EMBL" id="CP000872">
    <property type="protein sequence ID" value="ABX62906.1"/>
    <property type="molecule type" value="Genomic_DNA"/>
</dbReference>
<dbReference type="RefSeq" id="WP_002964945.1">
    <property type="nucleotide sequence ID" value="NC_010103.1"/>
</dbReference>
<dbReference type="SMR" id="A9M8K8"/>
<dbReference type="GeneID" id="97534838"/>
<dbReference type="KEGG" id="bcs:BCAN_A1916"/>
<dbReference type="HOGENOM" id="CLU_042432_0_0_5"/>
<dbReference type="PhylomeDB" id="A9M8K8"/>
<dbReference type="UniPathway" id="UPA00232"/>
<dbReference type="Proteomes" id="UP000001385">
    <property type="component" value="Chromosome I"/>
</dbReference>
<dbReference type="GO" id="GO:0102208">
    <property type="term" value="F:2-polyprenyl-6-hydroxyphenol methylase activity"/>
    <property type="evidence" value="ECO:0007669"/>
    <property type="project" value="UniProtKB-EC"/>
</dbReference>
<dbReference type="GO" id="GO:0061542">
    <property type="term" value="F:3-demethylubiquinol 3-O-methyltransferase activity"/>
    <property type="evidence" value="ECO:0007669"/>
    <property type="project" value="UniProtKB-UniRule"/>
</dbReference>
<dbReference type="GO" id="GO:0010420">
    <property type="term" value="F:polyprenyldihydroxybenzoate methyltransferase activity"/>
    <property type="evidence" value="ECO:0007669"/>
    <property type="project" value="InterPro"/>
</dbReference>
<dbReference type="GO" id="GO:0032259">
    <property type="term" value="P:methylation"/>
    <property type="evidence" value="ECO:0007669"/>
    <property type="project" value="UniProtKB-KW"/>
</dbReference>
<dbReference type="CDD" id="cd02440">
    <property type="entry name" value="AdoMet_MTases"/>
    <property type="match status" value="1"/>
</dbReference>
<dbReference type="Gene3D" id="3.40.50.150">
    <property type="entry name" value="Vaccinia Virus protein VP39"/>
    <property type="match status" value="1"/>
</dbReference>
<dbReference type="HAMAP" id="MF_00472">
    <property type="entry name" value="UbiG"/>
    <property type="match status" value="1"/>
</dbReference>
<dbReference type="InterPro" id="IPR029063">
    <property type="entry name" value="SAM-dependent_MTases_sf"/>
</dbReference>
<dbReference type="InterPro" id="IPR010233">
    <property type="entry name" value="UbiG_MeTrfase"/>
</dbReference>
<dbReference type="NCBIfam" id="TIGR01983">
    <property type="entry name" value="UbiG"/>
    <property type="match status" value="1"/>
</dbReference>
<dbReference type="PANTHER" id="PTHR43464">
    <property type="entry name" value="METHYLTRANSFERASE"/>
    <property type="match status" value="1"/>
</dbReference>
<dbReference type="PANTHER" id="PTHR43464:SF19">
    <property type="entry name" value="UBIQUINONE BIOSYNTHESIS O-METHYLTRANSFERASE, MITOCHONDRIAL"/>
    <property type="match status" value="1"/>
</dbReference>
<dbReference type="Pfam" id="PF13489">
    <property type="entry name" value="Methyltransf_23"/>
    <property type="match status" value="1"/>
</dbReference>
<dbReference type="SUPFAM" id="SSF53335">
    <property type="entry name" value="S-adenosyl-L-methionine-dependent methyltransferases"/>
    <property type="match status" value="1"/>
</dbReference>
<name>UBIG_BRUC2</name>
<reference key="1">
    <citation type="submission" date="2007-10" db="EMBL/GenBank/DDBJ databases">
        <title>Brucella canis ATCC 23365 whole genome shotgun sequencing project.</title>
        <authorList>
            <person name="Setubal J.C."/>
            <person name="Bowns C."/>
            <person name="Boyle S."/>
            <person name="Crasta O.R."/>
            <person name="Czar M.J."/>
            <person name="Dharmanolla C."/>
            <person name="Gillespie J.J."/>
            <person name="Kenyon R.W."/>
            <person name="Lu J."/>
            <person name="Mane S."/>
            <person name="Mohapatra S."/>
            <person name="Nagrani S."/>
            <person name="Purkayastha A."/>
            <person name="Rajasimha H.K."/>
            <person name="Shallom J.M."/>
            <person name="Shallom S."/>
            <person name="Shukla M."/>
            <person name="Snyder E.E."/>
            <person name="Sobral B.W."/>
            <person name="Wattam A.R."/>
            <person name="Will R."/>
            <person name="Williams K."/>
            <person name="Yoo H."/>
            <person name="Bruce D."/>
            <person name="Detter C."/>
            <person name="Munk C."/>
            <person name="Brettin T.S."/>
        </authorList>
    </citation>
    <scope>NUCLEOTIDE SEQUENCE [LARGE SCALE GENOMIC DNA]</scope>
    <source>
        <strain>ATCC 23365 / NCTC 10854 / RM-666</strain>
    </source>
</reference>
<comment type="function">
    <text evidence="1">O-methyltransferase that catalyzes the 2 O-methylation steps in the ubiquinone biosynthetic pathway.</text>
</comment>
<comment type="catalytic activity">
    <reaction evidence="1">
        <text>a 3-demethylubiquinol + S-adenosyl-L-methionine = a ubiquinol + S-adenosyl-L-homocysteine + H(+)</text>
        <dbReference type="Rhea" id="RHEA:44380"/>
        <dbReference type="Rhea" id="RHEA-COMP:9566"/>
        <dbReference type="Rhea" id="RHEA-COMP:10914"/>
        <dbReference type="ChEBI" id="CHEBI:15378"/>
        <dbReference type="ChEBI" id="CHEBI:17976"/>
        <dbReference type="ChEBI" id="CHEBI:57856"/>
        <dbReference type="ChEBI" id="CHEBI:59789"/>
        <dbReference type="ChEBI" id="CHEBI:84422"/>
        <dbReference type="EC" id="2.1.1.64"/>
    </reaction>
</comment>
<comment type="catalytic activity">
    <reaction evidence="1">
        <text>a 3-(all-trans-polyprenyl)benzene-1,2-diol + S-adenosyl-L-methionine = a 2-methoxy-6-(all-trans-polyprenyl)phenol + S-adenosyl-L-homocysteine + H(+)</text>
        <dbReference type="Rhea" id="RHEA:31411"/>
        <dbReference type="Rhea" id="RHEA-COMP:9550"/>
        <dbReference type="Rhea" id="RHEA-COMP:9551"/>
        <dbReference type="ChEBI" id="CHEBI:15378"/>
        <dbReference type="ChEBI" id="CHEBI:57856"/>
        <dbReference type="ChEBI" id="CHEBI:59789"/>
        <dbReference type="ChEBI" id="CHEBI:62729"/>
        <dbReference type="ChEBI" id="CHEBI:62731"/>
        <dbReference type="EC" id="2.1.1.222"/>
    </reaction>
</comment>
<comment type="pathway">
    <text evidence="1">Cofactor biosynthesis; ubiquinone biosynthesis.</text>
</comment>
<comment type="similarity">
    <text evidence="1">Belongs to the methyltransferase superfamily. UbiG/COQ3 family.</text>
</comment>
<feature type="chain" id="PRO_1000081214" description="Ubiquinone biosynthesis O-methyltransferase">
    <location>
        <begin position="1"/>
        <end position="248"/>
    </location>
</feature>
<feature type="binding site" evidence="1">
    <location>
        <position position="41"/>
    </location>
    <ligand>
        <name>S-adenosyl-L-methionine</name>
        <dbReference type="ChEBI" id="CHEBI:59789"/>
    </ligand>
</feature>
<feature type="binding site" evidence="1">
    <location>
        <position position="72"/>
    </location>
    <ligand>
        <name>S-adenosyl-L-methionine</name>
        <dbReference type="ChEBI" id="CHEBI:59789"/>
    </ligand>
</feature>
<feature type="binding site" evidence="1">
    <location>
        <position position="93"/>
    </location>
    <ligand>
        <name>S-adenosyl-L-methionine</name>
        <dbReference type="ChEBI" id="CHEBI:59789"/>
    </ligand>
</feature>
<feature type="binding site" evidence="1">
    <location>
        <position position="136"/>
    </location>
    <ligand>
        <name>S-adenosyl-L-methionine</name>
        <dbReference type="ChEBI" id="CHEBI:59789"/>
    </ligand>
</feature>
<organism>
    <name type="scientific">Brucella canis (strain ATCC 23365 / NCTC 10854 / RM-666)</name>
    <dbReference type="NCBI Taxonomy" id="483179"/>
    <lineage>
        <taxon>Bacteria</taxon>
        <taxon>Pseudomonadati</taxon>
        <taxon>Pseudomonadota</taxon>
        <taxon>Alphaproteobacteria</taxon>
        <taxon>Hyphomicrobiales</taxon>
        <taxon>Brucellaceae</taxon>
        <taxon>Brucella/Ochrobactrum group</taxon>
        <taxon>Brucella</taxon>
    </lineage>
</organism>
<evidence type="ECO:0000255" key="1">
    <source>
        <dbReference type="HAMAP-Rule" id="MF_00472"/>
    </source>
</evidence>
<keyword id="KW-0489">Methyltransferase</keyword>
<keyword id="KW-1185">Reference proteome</keyword>
<keyword id="KW-0949">S-adenosyl-L-methionine</keyword>
<keyword id="KW-0808">Transferase</keyword>
<keyword id="KW-0831">Ubiquinone biosynthesis</keyword>